<feature type="chain" id="PRO_0000087635" description="U11-ctenitoxin-Pn1b">
    <location>
        <begin position="1"/>
        <end position="58"/>
    </location>
</feature>
<feature type="disulfide bond" evidence="3">
    <location>
        <begin position="2"/>
        <end position="16"/>
    </location>
</feature>
<feature type="disulfide bond" evidence="3">
    <location>
        <begin position="9"/>
        <end position="22"/>
    </location>
</feature>
<feature type="disulfide bond" evidence="3">
    <location>
        <begin position="15"/>
        <end position="40"/>
    </location>
</feature>
<feature type="disulfide bond" evidence="3">
    <location>
        <begin position="24"/>
        <end position="38"/>
    </location>
</feature>
<feature type="disulfide bond" evidence="3">
    <location>
        <begin position="48"/>
        <end position="55"/>
    </location>
</feature>
<feature type="sequence variant" evidence="1 2">
    <original>Y</original>
    <variation>H</variation>
    <location>
        <position position="42"/>
    </location>
</feature>
<proteinExistence type="evidence at protein level"/>
<comment type="function">
    <text evidence="1 2">Non-toxic to mice.</text>
</comment>
<comment type="subcellular location">
    <subcellularLocation>
        <location evidence="1">Secreted</location>
    </subcellularLocation>
</comment>
<comment type="tissue specificity">
    <text evidence="1">Expressed by the venom gland.</text>
</comment>
<comment type="domain">
    <text evidence="3">The presence of a 'disulfide through disulfide knot' structurally defines this protein as a knottin.</text>
</comment>
<comment type="mass spectrometry" mass="6568.4" method="Electrospray" evidence="1 2"/>
<comment type="similarity">
    <text evidence="3">Belongs to the neurotoxin 09 (Tx3-6) family.</text>
</comment>
<protein>
    <recommendedName>
        <fullName>U11-ctenitoxin-Pn1b</fullName>
        <shortName>U11-CNTX-Pn1b</shortName>
    </recommendedName>
    <alternativeName>
        <fullName>Venom protein PNTx22C3</fullName>
    </alternativeName>
</protein>
<reference evidence="3" key="1">
    <citation type="journal article" date="2006" name="Comp. Biochem. Physiol.">
        <title>Comparison of the partial proteomes of the venoms of Brazilian spiders of the genus Phoneutria.</title>
        <authorList>
            <person name="Richardson M."/>
            <person name="Pimenta A.M."/>
            <person name="Bemquerer M.P."/>
            <person name="Santoro M.M."/>
            <person name="Beirao P.S."/>
            <person name="Lima M.E."/>
            <person name="Figueiredo S.G."/>
            <person name="Bloch C. Jr."/>
            <person name="Vasconcelos E.A."/>
            <person name="Campos F.A."/>
            <person name="Gomes P.C."/>
            <person name="Cordeiro M.N."/>
        </authorList>
    </citation>
    <scope>PROTEIN SEQUENCE</scope>
    <scope>SUBCELLULAR LOCATION</scope>
    <scope>TISSUE SPECIFICITY</scope>
    <source>
        <tissue evidence="1">Venom</tissue>
    </source>
</reference>
<reference evidence="3" key="2">
    <citation type="submission" date="2004-06" db="UniProtKB">
        <title>Protein PNTx22C3 from venom of Brazilian armed spider Phoneutria nigriventer has sequence similarities with insecticidal toxins from other spiders.</title>
        <authorList>
            <person name="Richardson M."/>
            <person name="Pimenta A.M.C."/>
            <person name="Bemquerer M.P."/>
            <person name="Santoro M.M."/>
            <person name="Figueiredo S.G."/>
            <person name="Cordeiro M.N."/>
        </authorList>
    </citation>
    <scope>PROTEIN SEQUENCE</scope>
    <scope>FUNCTION</scope>
    <scope>MASS SPECTROMETRY</scope>
    <scope>VARIANT HIS-42</scope>
    <source>
        <tissue evidence="1">Venom</tissue>
    </source>
</reference>
<organism>
    <name type="scientific">Phoneutria nigriventer</name>
    <name type="common">Brazilian armed spider</name>
    <name type="synonym">Ctenus nigriventer</name>
    <dbReference type="NCBI Taxonomy" id="6918"/>
    <lineage>
        <taxon>Eukaryota</taxon>
        <taxon>Metazoa</taxon>
        <taxon>Ecdysozoa</taxon>
        <taxon>Arthropoda</taxon>
        <taxon>Chelicerata</taxon>
        <taxon>Arachnida</taxon>
        <taxon>Araneae</taxon>
        <taxon>Araneomorphae</taxon>
        <taxon>Entelegynae</taxon>
        <taxon>Lycosoidea</taxon>
        <taxon>Ctenidae</taxon>
        <taxon>Phoneutria</taxon>
    </lineage>
</organism>
<dbReference type="SMR" id="P84011"/>
<dbReference type="ArachnoServer" id="AS000161">
    <property type="toxin name" value="U11-ctenitoxin-Pn1b"/>
</dbReference>
<dbReference type="GO" id="GO:0005576">
    <property type="term" value="C:extracellular region"/>
    <property type="evidence" value="ECO:0007669"/>
    <property type="project" value="UniProtKB-SubCell"/>
</dbReference>
<name>TX90E_PHONI</name>
<evidence type="ECO:0000269" key="1">
    <source>
    </source>
</evidence>
<evidence type="ECO:0000269" key="2">
    <source ref="2"/>
</evidence>
<evidence type="ECO:0000305" key="3"/>
<keyword id="KW-0903">Direct protein sequencing</keyword>
<keyword id="KW-1015">Disulfide bond</keyword>
<keyword id="KW-0960">Knottin</keyword>
<keyword id="KW-0964">Secreted</keyword>
<accession>P84011</accession>
<sequence length="58" mass="6610">ACLARGETCKDDCECCDCDNQCYCPFDWFGGKWHPVGCSCAYTNKYVCDHKKEKCKKA</sequence>